<reference key="1">
    <citation type="journal article" date="2001" name="Proc. Natl. Acad. Sci. U.S.A.">
        <title>Complete genomic sequence of Pasteurella multocida Pm70.</title>
        <authorList>
            <person name="May B.J."/>
            <person name="Zhang Q."/>
            <person name="Li L.L."/>
            <person name="Paustian M.L."/>
            <person name="Whittam T.S."/>
            <person name="Kapur V."/>
        </authorList>
    </citation>
    <scope>NUCLEOTIDE SEQUENCE [LARGE SCALE GENOMIC DNA]</scope>
    <source>
        <strain>Pm70</strain>
    </source>
</reference>
<keyword id="KW-1185">Reference proteome</keyword>
<dbReference type="EMBL" id="AE004439">
    <property type="protein sequence ID" value="AAK02606.1"/>
    <property type="molecule type" value="Genomic_DNA"/>
</dbReference>
<dbReference type="RefSeq" id="WP_005726291.1">
    <property type="nucleotide sequence ID" value="NC_002663.1"/>
</dbReference>
<dbReference type="SMR" id="Q9CNB0"/>
<dbReference type="STRING" id="272843.PM0522"/>
<dbReference type="EnsemblBacteria" id="AAK02606">
    <property type="protein sequence ID" value="AAK02606"/>
    <property type="gene ID" value="PM0522"/>
</dbReference>
<dbReference type="KEGG" id="pmu:PM0522"/>
<dbReference type="HOGENOM" id="CLU_011226_9_3_6"/>
<dbReference type="OrthoDB" id="9781431at2"/>
<dbReference type="Proteomes" id="UP000000809">
    <property type="component" value="Chromosome"/>
</dbReference>
<dbReference type="GO" id="GO:0005737">
    <property type="term" value="C:cytoplasm"/>
    <property type="evidence" value="ECO:0007669"/>
    <property type="project" value="TreeGrafter"/>
</dbReference>
<dbReference type="CDD" id="cd03186">
    <property type="entry name" value="GST_C_SspA"/>
    <property type="match status" value="1"/>
</dbReference>
<dbReference type="CDD" id="cd03059">
    <property type="entry name" value="GST_N_SspA"/>
    <property type="match status" value="1"/>
</dbReference>
<dbReference type="Gene3D" id="1.20.1050.10">
    <property type="match status" value="1"/>
</dbReference>
<dbReference type="Gene3D" id="3.40.30.10">
    <property type="entry name" value="Glutaredoxin"/>
    <property type="match status" value="1"/>
</dbReference>
<dbReference type="InterPro" id="IPR010987">
    <property type="entry name" value="Glutathione-S-Trfase_C-like"/>
</dbReference>
<dbReference type="InterPro" id="IPR036282">
    <property type="entry name" value="Glutathione-S-Trfase_C_sf"/>
</dbReference>
<dbReference type="InterPro" id="IPR040079">
    <property type="entry name" value="Glutathione_S-Trfase"/>
</dbReference>
<dbReference type="InterPro" id="IPR004045">
    <property type="entry name" value="Glutathione_S-Trfase_N"/>
</dbReference>
<dbReference type="InterPro" id="IPR004046">
    <property type="entry name" value="GST_C"/>
</dbReference>
<dbReference type="InterPro" id="IPR050983">
    <property type="entry name" value="GST_Omega/HSP26"/>
</dbReference>
<dbReference type="InterPro" id="IPR034342">
    <property type="entry name" value="SspA_C"/>
</dbReference>
<dbReference type="InterPro" id="IPR034341">
    <property type="entry name" value="SspA_N"/>
</dbReference>
<dbReference type="InterPro" id="IPR036249">
    <property type="entry name" value="Thioredoxin-like_sf"/>
</dbReference>
<dbReference type="NCBIfam" id="NF007016">
    <property type="entry name" value="PRK09481.1"/>
    <property type="match status" value="1"/>
</dbReference>
<dbReference type="PANTHER" id="PTHR43968">
    <property type="match status" value="1"/>
</dbReference>
<dbReference type="PANTHER" id="PTHR43968:SF6">
    <property type="entry name" value="GLUTATHIONE S-TRANSFERASE OMEGA"/>
    <property type="match status" value="1"/>
</dbReference>
<dbReference type="Pfam" id="PF00043">
    <property type="entry name" value="GST_C"/>
    <property type="match status" value="1"/>
</dbReference>
<dbReference type="Pfam" id="PF13409">
    <property type="entry name" value="GST_N_2"/>
    <property type="match status" value="1"/>
</dbReference>
<dbReference type="SFLD" id="SFLDS00019">
    <property type="entry name" value="Glutathione_Transferase_(cytos"/>
    <property type="match status" value="1"/>
</dbReference>
<dbReference type="SFLD" id="SFLDG00358">
    <property type="entry name" value="Main_(cytGST)"/>
    <property type="match status" value="1"/>
</dbReference>
<dbReference type="SUPFAM" id="SSF47616">
    <property type="entry name" value="GST C-terminal domain-like"/>
    <property type="match status" value="1"/>
</dbReference>
<dbReference type="SUPFAM" id="SSF52833">
    <property type="entry name" value="Thioredoxin-like"/>
    <property type="match status" value="1"/>
</dbReference>
<dbReference type="PROSITE" id="PS50405">
    <property type="entry name" value="GST_CTER"/>
    <property type="match status" value="1"/>
</dbReference>
<dbReference type="PROSITE" id="PS50404">
    <property type="entry name" value="GST_NTER"/>
    <property type="match status" value="1"/>
</dbReference>
<organism>
    <name type="scientific">Pasteurella multocida (strain Pm70)</name>
    <dbReference type="NCBI Taxonomy" id="272843"/>
    <lineage>
        <taxon>Bacteria</taxon>
        <taxon>Pseudomonadati</taxon>
        <taxon>Pseudomonadota</taxon>
        <taxon>Gammaproteobacteria</taxon>
        <taxon>Pasteurellales</taxon>
        <taxon>Pasteurellaceae</taxon>
        <taxon>Pasteurella</taxon>
    </lineage>
</organism>
<protein>
    <recommendedName>
        <fullName>Stringent starvation protein A homolog</fullName>
    </recommendedName>
</protein>
<gene>
    <name type="primary">sspA</name>
    <name type="ordered locus">PM0522</name>
</gene>
<accession>Q9CNB0</accession>
<name>SSPA_PASMU</name>
<sequence>MTSAANKRSIMTLFSDKTDIYCHQVRIVLAEKGVAYETEVVDPQVVSEDLMELNPYGTLPTLVDRDLVLFNSRIIMEYLDERFPHPPLMPVYPVARGKSRLLMLRIEQDWYPVLAKAEKGTDAERAVALKQLREEILAIAPIFTQMPYFMSEEFSLVDCYIAPLLWRMQELGVDFSGAGSKAIKAYMARVFERDSFMQSLGVSAPKNLMDEK</sequence>
<evidence type="ECO:0000250" key="1"/>
<evidence type="ECO:0000305" key="2"/>
<feature type="chain" id="PRO_0000185882" description="Stringent starvation protein A homolog">
    <location>
        <begin position="1"/>
        <end position="212"/>
    </location>
</feature>
<feature type="domain" description="GST N-terminal">
    <location>
        <begin position="9"/>
        <end position="87"/>
    </location>
</feature>
<feature type="domain" description="GST C-terminal">
    <location>
        <begin position="92"/>
        <end position="212"/>
    </location>
</feature>
<comment type="function">
    <text evidence="1">Forms an equimolar complex with the RNA polymerase holoenzyme (RNAP) but not with the core enzyme.</text>
</comment>
<comment type="similarity">
    <text evidence="2">Belongs to the GST superfamily. HSP26 family.</text>
</comment>
<proteinExistence type="inferred from homology"/>